<gene>
    <name evidence="1" type="primary">nrdR</name>
    <name type="ordered locus">HI_0943</name>
</gene>
<protein>
    <recommendedName>
        <fullName evidence="1">Transcriptional repressor NrdR</fullName>
    </recommendedName>
</protein>
<accession>P44946</accession>
<proteinExistence type="inferred from homology"/>
<dbReference type="EMBL" id="L42023">
    <property type="protein sequence ID" value="AAC22597.1"/>
    <property type="molecule type" value="Genomic_DNA"/>
</dbReference>
<dbReference type="PIR" id="B64162">
    <property type="entry name" value="B64162"/>
</dbReference>
<dbReference type="RefSeq" id="NP_439103.1">
    <property type="nucleotide sequence ID" value="NC_000907.1"/>
</dbReference>
<dbReference type="SMR" id="P44946"/>
<dbReference type="STRING" id="71421.HI_0943"/>
<dbReference type="EnsemblBacteria" id="AAC22597">
    <property type="protein sequence ID" value="AAC22597"/>
    <property type="gene ID" value="HI_0943"/>
</dbReference>
<dbReference type="KEGG" id="hin:HI_0943"/>
<dbReference type="PATRIC" id="fig|71421.8.peg.984"/>
<dbReference type="eggNOG" id="COG1327">
    <property type="taxonomic scope" value="Bacteria"/>
</dbReference>
<dbReference type="HOGENOM" id="CLU_108412_0_0_6"/>
<dbReference type="OrthoDB" id="9807461at2"/>
<dbReference type="PhylomeDB" id="P44946"/>
<dbReference type="BioCyc" id="HINF71421:G1GJ1-983-MONOMER"/>
<dbReference type="Proteomes" id="UP000000579">
    <property type="component" value="Chromosome"/>
</dbReference>
<dbReference type="GO" id="GO:0005524">
    <property type="term" value="F:ATP binding"/>
    <property type="evidence" value="ECO:0007669"/>
    <property type="project" value="UniProtKB-KW"/>
</dbReference>
<dbReference type="GO" id="GO:0003690">
    <property type="term" value="F:double-stranded DNA binding"/>
    <property type="evidence" value="ECO:0000318"/>
    <property type="project" value="GO_Central"/>
</dbReference>
<dbReference type="GO" id="GO:0008270">
    <property type="term" value="F:zinc ion binding"/>
    <property type="evidence" value="ECO:0007669"/>
    <property type="project" value="UniProtKB-UniRule"/>
</dbReference>
<dbReference type="GO" id="GO:0045892">
    <property type="term" value="P:negative regulation of DNA-templated transcription"/>
    <property type="evidence" value="ECO:0000318"/>
    <property type="project" value="GO_Central"/>
</dbReference>
<dbReference type="HAMAP" id="MF_00440">
    <property type="entry name" value="NrdR"/>
    <property type="match status" value="1"/>
</dbReference>
<dbReference type="InterPro" id="IPR005144">
    <property type="entry name" value="ATP-cone_dom"/>
</dbReference>
<dbReference type="InterPro" id="IPR055173">
    <property type="entry name" value="NrdR-like_N"/>
</dbReference>
<dbReference type="InterPro" id="IPR003796">
    <property type="entry name" value="RNR_NrdR-like"/>
</dbReference>
<dbReference type="NCBIfam" id="TIGR00244">
    <property type="entry name" value="transcriptional regulator NrdR"/>
    <property type="match status" value="1"/>
</dbReference>
<dbReference type="PANTHER" id="PTHR30455">
    <property type="entry name" value="TRANSCRIPTIONAL REPRESSOR NRDR"/>
    <property type="match status" value="1"/>
</dbReference>
<dbReference type="PANTHER" id="PTHR30455:SF2">
    <property type="entry name" value="TRANSCRIPTIONAL REPRESSOR NRDR"/>
    <property type="match status" value="1"/>
</dbReference>
<dbReference type="Pfam" id="PF03477">
    <property type="entry name" value="ATP-cone"/>
    <property type="match status" value="1"/>
</dbReference>
<dbReference type="Pfam" id="PF22811">
    <property type="entry name" value="Zn_ribbon_NrdR"/>
    <property type="match status" value="1"/>
</dbReference>
<dbReference type="PROSITE" id="PS51161">
    <property type="entry name" value="ATP_CONE"/>
    <property type="match status" value="1"/>
</dbReference>
<comment type="function">
    <text evidence="1">Negatively regulates transcription of bacterial ribonucleotide reductase nrd genes and operons by binding to NrdR-boxes.</text>
</comment>
<comment type="cofactor">
    <cofactor evidence="1">
        <name>Zn(2+)</name>
        <dbReference type="ChEBI" id="CHEBI:29105"/>
    </cofactor>
    <text evidence="1">Binds 1 zinc ion.</text>
</comment>
<comment type="similarity">
    <text evidence="1">Belongs to the NrdR family.</text>
</comment>
<evidence type="ECO:0000255" key="1">
    <source>
        <dbReference type="HAMAP-Rule" id="MF_00440"/>
    </source>
</evidence>
<name>NRDR_HAEIN</name>
<keyword id="KW-0067">ATP-binding</keyword>
<keyword id="KW-0238">DNA-binding</keyword>
<keyword id="KW-0479">Metal-binding</keyword>
<keyword id="KW-0547">Nucleotide-binding</keyword>
<keyword id="KW-1185">Reference proteome</keyword>
<keyword id="KW-0678">Repressor</keyword>
<keyword id="KW-0804">Transcription</keyword>
<keyword id="KW-0805">Transcription regulation</keyword>
<keyword id="KW-0862">Zinc</keyword>
<keyword id="KW-0863">Zinc-finger</keyword>
<feature type="chain" id="PRO_0000182304" description="Transcriptional repressor NrdR">
    <location>
        <begin position="1"/>
        <end position="149"/>
    </location>
</feature>
<feature type="domain" description="ATP-cone" evidence="1">
    <location>
        <begin position="49"/>
        <end position="139"/>
    </location>
</feature>
<feature type="zinc finger region" evidence="1">
    <location>
        <begin position="3"/>
        <end position="34"/>
    </location>
</feature>
<organism>
    <name type="scientific">Haemophilus influenzae (strain ATCC 51907 / DSM 11121 / KW20 / Rd)</name>
    <dbReference type="NCBI Taxonomy" id="71421"/>
    <lineage>
        <taxon>Bacteria</taxon>
        <taxon>Pseudomonadati</taxon>
        <taxon>Pseudomonadota</taxon>
        <taxon>Gammaproteobacteria</taxon>
        <taxon>Pasteurellales</taxon>
        <taxon>Pasteurellaceae</taxon>
        <taxon>Haemophilus</taxon>
    </lineage>
</organism>
<sequence length="149" mass="17279">MHCPFCDTEETKVIDSRLVSDGYQVRRRRECGHCHERFTTFEMAELIIPKIIKTDGTREPFNEDKLRSGIQHALEKRPVSADDVEKAINHIILQLRATGEREVPSKLVGKLAMNELKKLDKVAYIRFASVYLSFDDIDQFTIEIEKLKD</sequence>
<reference key="1">
    <citation type="journal article" date="1995" name="Science">
        <title>Whole-genome random sequencing and assembly of Haemophilus influenzae Rd.</title>
        <authorList>
            <person name="Fleischmann R.D."/>
            <person name="Adams M.D."/>
            <person name="White O."/>
            <person name="Clayton R.A."/>
            <person name="Kirkness E.F."/>
            <person name="Kerlavage A.R."/>
            <person name="Bult C.J."/>
            <person name="Tomb J.-F."/>
            <person name="Dougherty B.A."/>
            <person name="Merrick J.M."/>
            <person name="McKenney K."/>
            <person name="Sutton G.G."/>
            <person name="FitzHugh W."/>
            <person name="Fields C.A."/>
            <person name="Gocayne J.D."/>
            <person name="Scott J.D."/>
            <person name="Shirley R."/>
            <person name="Liu L.-I."/>
            <person name="Glodek A."/>
            <person name="Kelley J.M."/>
            <person name="Weidman J.F."/>
            <person name="Phillips C.A."/>
            <person name="Spriggs T."/>
            <person name="Hedblom E."/>
            <person name="Cotton M.D."/>
            <person name="Utterback T.R."/>
            <person name="Hanna M.C."/>
            <person name="Nguyen D.T."/>
            <person name="Saudek D.M."/>
            <person name="Brandon R.C."/>
            <person name="Fine L.D."/>
            <person name="Fritchman J.L."/>
            <person name="Fuhrmann J.L."/>
            <person name="Geoghagen N.S.M."/>
            <person name="Gnehm C.L."/>
            <person name="McDonald L.A."/>
            <person name="Small K.V."/>
            <person name="Fraser C.M."/>
            <person name="Smith H.O."/>
            <person name="Venter J.C."/>
        </authorList>
    </citation>
    <scope>NUCLEOTIDE SEQUENCE [LARGE SCALE GENOMIC DNA]</scope>
    <source>
        <strain>ATCC 51907 / DSM 11121 / KW20 / Rd</strain>
    </source>
</reference>